<protein>
    <recommendedName>
        <fullName>Uncharacterized protein YJL028W</fullName>
    </recommendedName>
</protein>
<sequence>MALWGRSAYRQKTVTSRLTKHRHTSPLNLLNFFIFFSLHLCALFLATAVHYACFACFVLFRHAILLLFYLLARGRASQIQARQKVRCTGATFYRFLIISLSQRAWATKKPI</sequence>
<reference key="1">
    <citation type="journal article" date="1996" name="EMBO J.">
        <title>Complete nucleotide sequence of Saccharomyces cerevisiae chromosome X.</title>
        <authorList>
            <person name="Galibert F."/>
            <person name="Alexandraki D."/>
            <person name="Baur A."/>
            <person name="Boles E."/>
            <person name="Chalwatzis N."/>
            <person name="Chuat J.-C."/>
            <person name="Coster F."/>
            <person name="Cziepluch C."/>
            <person name="de Haan M."/>
            <person name="Domdey H."/>
            <person name="Durand P."/>
            <person name="Entian K.-D."/>
            <person name="Gatius M."/>
            <person name="Goffeau A."/>
            <person name="Grivell L.A."/>
            <person name="Hennemann A."/>
            <person name="Herbert C.J."/>
            <person name="Heumann K."/>
            <person name="Hilger F."/>
            <person name="Hollenberg C.P."/>
            <person name="Huang M.-E."/>
            <person name="Jacq C."/>
            <person name="Jauniaux J.-C."/>
            <person name="Katsoulou C."/>
            <person name="Kirchrath L."/>
            <person name="Kleine K."/>
            <person name="Kordes E."/>
            <person name="Koetter P."/>
            <person name="Liebl S."/>
            <person name="Louis E.J."/>
            <person name="Manus V."/>
            <person name="Mewes H.-W."/>
            <person name="Miosga T."/>
            <person name="Obermaier B."/>
            <person name="Perea J."/>
            <person name="Pohl T.M."/>
            <person name="Portetelle D."/>
            <person name="Pujol A."/>
            <person name="Purnelle B."/>
            <person name="Ramezani Rad M."/>
            <person name="Rasmussen S.W."/>
            <person name="Rose M."/>
            <person name="Rossau R."/>
            <person name="Schaaff-Gerstenschlaeger I."/>
            <person name="Smits P.H.M."/>
            <person name="Scarcez T."/>
            <person name="Soriano N."/>
            <person name="To Van D."/>
            <person name="Tzermia M."/>
            <person name="Van Broekhoven A."/>
            <person name="Vandenbol M."/>
            <person name="Wedler H."/>
            <person name="von Wettstein D."/>
            <person name="Wambutt R."/>
            <person name="Zagulski M."/>
            <person name="Zollner A."/>
            <person name="Karpfinger-Hartl L."/>
        </authorList>
    </citation>
    <scope>NUCLEOTIDE SEQUENCE [LARGE SCALE GENOMIC DNA]</scope>
    <source>
        <strain>ATCC 204508 / S288c</strain>
    </source>
</reference>
<reference key="2">
    <citation type="journal article" date="2014" name="G3 (Bethesda)">
        <title>The reference genome sequence of Saccharomyces cerevisiae: Then and now.</title>
        <authorList>
            <person name="Engel S.R."/>
            <person name="Dietrich F.S."/>
            <person name="Fisk D.G."/>
            <person name="Binkley G."/>
            <person name="Balakrishnan R."/>
            <person name="Costanzo M.C."/>
            <person name="Dwight S.S."/>
            <person name="Hitz B.C."/>
            <person name="Karra K."/>
            <person name="Nash R.S."/>
            <person name="Weng S."/>
            <person name="Wong E.D."/>
            <person name="Lloyd P."/>
            <person name="Skrzypek M.S."/>
            <person name="Miyasato S.R."/>
            <person name="Simison M."/>
            <person name="Cherry J.M."/>
        </authorList>
    </citation>
    <scope>GENOME REANNOTATION</scope>
    <source>
        <strain>ATCC 204508 / S288c</strain>
    </source>
</reference>
<feature type="chain" id="PRO_0000203071" description="Uncharacterized protein YJL028W">
    <location>
        <begin position="1"/>
        <end position="111"/>
    </location>
</feature>
<feature type="transmembrane region" description="Helical" evidence="1">
    <location>
        <begin position="29"/>
        <end position="49"/>
    </location>
</feature>
<feature type="transmembrane region" description="Helical" evidence="1">
    <location>
        <begin position="52"/>
        <end position="72"/>
    </location>
</feature>
<evidence type="ECO:0000255" key="1"/>
<evidence type="ECO:0000305" key="2"/>
<keyword id="KW-0472">Membrane</keyword>
<keyword id="KW-1185">Reference proteome</keyword>
<keyword id="KW-0812">Transmembrane</keyword>
<keyword id="KW-1133">Transmembrane helix</keyword>
<accession>P47062</accession>
<accession>D6VWF4</accession>
<gene>
    <name type="ordered locus">YJL028W</name>
    <name type="ORF">J1267</name>
</gene>
<comment type="subcellular location">
    <subcellularLocation>
        <location evidence="2">Membrane</location>
        <topology evidence="2">Multi-pass membrane protein</topology>
    </subcellularLocation>
</comment>
<name>YJC8_YEAST</name>
<proteinExistence type="predicted"/>
<dbReference type="EMBL" id="Z49303">
    <property type="protein sequence ID" value="CAA89319.1"/>
    <property type="molecule type" value="Genomic_DNA"/>
</dbReference>
<dbReference type="EMBL" id="BK006943">
    <property type="protein sequence ID" value="DAA08770.1"/>
    <property type="molecule type" value="Genomic_DNA"/>
</dbReference>
<dbReference type="PIR" id="S56800">
    <property type="entry name" value="S56800"/>
</dbReference>
<dbReference type="RefSeq" id="NP_012506.1">
    <property type="nucleotide sequence ID" value="NM_001181462.1"/>
</dbReference>
<dbReference type="SMR" id="P47062"/>
<dbReference type="BioGRID" id="300654">
    <property type="interactions" value="12"/>
</dbReference>
<dbReference type="FunCoup" id="P47062">
    <property type="interactions" value="20"/>
</dbReference>
<dbReference type="STRING" id="4932.YJL028W"/>
<dbReference type="PaxDb" id="4932-YJL028W"/>
<dbReference type="EnsemblFungi" id="YJL028W_mRNA">
    <property type="protein sequence ID" value="YJL028W"/>
    <property type="gene ID" value="YJL028W"/>
</dbReference>
<dbReference type="GeneID" id="853425"/>
<dbReference type="KEGG" id="sce:YJL028W"/>
<dbReference type="AGR" id="SGD:S000003565"/>
<dbReference type="SGD" id="S000003565">
    <property type="gene designation" value="YJL028W"/>
</dbReference>
<dbReference type="VEuPathDB" id="FungiDB:YJL028W"/>
<dbReference type="HOGENOM" id="CLU_2160390_0_0_1"/>
<dbReference type="InParanoid" id="P47062"/>
<dbReference type="OrthoDB" id="10430533at2759"/>
<dbReference type="BioCyc" id="YEAST:G3O-31497-MONOMER"/>
<dbReference type="BioGRID-ORCS" id="853425">
    <property type="hits" value="1 hit in 10 CRISPR screens"/>
</dbReference>
<dbReference type="PRO" id="PR:P47062"/>
<dbReference type="Proteomes" id="UP000002311">
    <property type="component" value="Chromosome X"/>
</dbReference>
<dbReference type="RNAct" id="P47062">
    <property type="molecule type" value="protein"/>
</dbReference>
<dbReference type="GO" id="GO:0016020">
    <property type="term" value="C:membrane"/>
    <property type="evidence" value="ECO:0007669"/>
    <property type="project" value="UniProtKB-SubCell"/>
</dbReference>
<organism>
    <name type="scientific">Saccharomyces cerevisiae (strain ATCC 204508 / S288c)</name>
    <name type="common">Baker's yeast</name>
    <dbReference type="NCBI Taxonomy" id="559292"/>
    <lineage>
        <taxon>Eukaryota</taxon>
        <taxon>Fungi</taxon>
        <taxon>Dikarya</taxon>
        <taxon>Ascomycota</taxon>
        <taxon>Saccharomycotina</taxon>
        <taxon>Saccharomycetes</taxon>
        <taxon>Saccharomycetales</taxon>
        <taxon>Saccharomycetaceae</taxon>
        <taxon>Saccharomyces</taxon>
    </lineage>
</organism>